<evidence type="ECO:0000269" key="1">
    <source ref="1"/>
</evidence>
<organism>
    <name type="scientific">Palomena prasina</name>
    <name type="common">Green shield bug</name>
    <name type="synonym">Cimex prasinus</name>
    <dbReference type="NCBI Taxonomy" id="55431"/>
    <lineage>
        <taxon>Eukaryota</taxon>
        <taxon>Metazoa</taxon>
        <taxon>Ecdysozoa</taxon>
        <taxon>Arthropoda</taxon>
        <taxon>Hexapoda</taxon>
        <taxon>Insecta</taxon>
        <taxon>Pterygota</taxon>
        <taxon>Neoptera</taxon>
        <taxon>Paraneoptera</taxon>
        <taxon>Hemiptera</taxon>
        <taxon>Heteroptera</taxon>
        <taxon>Panheteroptera</taxon>
        <taxon>Pentatomomorpha</taxon>
        <taxon>Pentatomoidea</taxon>
        <taxon>Pentatomidae</taxon>
        <taxon>Pentatominae</taxon>
        <taxon>Palomena</taxon>
    </lineage>
</organism>
<keyword id="KW-0002">3D-structure</keyword>
<keyword id="KW-0044">Antibiotic</keyword>
<keyword id="KW-0929">Antimicrobial</keyword>
<keyword id="KW-0903">Direct protein sequencing</keyword>
<keyword id="KW-0391">Immunity</keyword>
<keyword id="KW-0399">Innate immunity</keyword>
<feature type="peptide" id="PRO_0000044160" description="Metalnikowin-1">
    <location>
        <begin position="1"/>
        <end position="15"/>
    </location>
</feature>
<protein>
    <recommendedName>
        <fullName>Metalnikowin-1</fullName>
    </recommendedName>
    <alternativeName>
        <fullName>Metalnikowin I</fullName>
    </alternativeName>
</protein>
<accession>P80408</accession>
<proteinExistence type="evidence at protein level"/>
<name>MK1_PALPR</name>
<reference key="1">
    <citation type="journal article" date="1996" name="J. Insect Physiol.">
        <title>The inducible antibacterial peptides of the hemipteran insect Palomena prasina: identification of a unique family of proline-rich peptides and of a novel insect defensin.</title>
        <authorList>
            <person name="Chernysh S."/>
            <person name="Cociancich S."/>
            <person name="Briand J.-P."/>
            <person name="Hetru C."/>
            <person name="Bulet P."/>
        </authorList>
    </citation>
    <scope>PROTEIN SEQUENCE</scope>
    <scope>FUNCTION</scope>
    <scope>INDUCTION</scope>
    <scope>MASS SPECTROMETRY</scope>
    <source>
        <tissue>Hemolymph</tissue>
        <tissue>Larval hemolymph</tissue>
    </source>
</reference>
<sequence>VDKPDYRPRPRPPNM</sequence>
<comment type="function">
    <text evidence="1">Antibacterial peptide active against Gram-negative bacteria.</text>
</comment>
<comment type="induction">
    <text evidence="1">By bacterial infection.</text>
</comment>
<comment type="mass spectrometry"/>
<dbReference type="PDB" id="5HCP">
    <property type="method" value="X-ray"/>
    <property type="resolution" value="2.89 A"/>
    <property type="chains" value="1z/2z=1-15"/>
</dbReference>
<dbReference type="PDBsum" id="5HCP"/>
<dbReference type="SMR" id="P80408"/>
<dbReference type="GO" id="GO:0005576">
    <property type="term" value="C:extracellular region"/>
    <property type="evidence" value="ECO:0000314"/>
    <property type="project" value="UniProtKB"/>
</dbReference>
<dbReference type="GO" id="GO:0050829">
    <property type="term" value="P:defense response to Gram-negative bacterium"/>
    <property type="evidence" value="ECO:0000314"/>
    <property type="project" value="UniProtKB"/>
</dbReference>
<dbReference type="GO" id="GO:0045087">
    <property type="term" value="P:innate immune response"/>
    <property type="evidence" value="ECO:0007669"/>
    <property type="project" value="UniProtKB-KW"/>
</dbReference>